<evidence type="ECO:0000255" key="1">
    <source>
        <dbReference type="HAMAP-Rule" id="MF_01398"/>
    </source>
</evidence>
<protein>
    <recommendedName>
        <fullName evidence="1">ATP synthase subunit b</fullName>
    </recommendedName>
    <alternativeName>
        <fullName evidence="1">ATP synthase F(0) sector subunit b</fullName>
    </alternativeName>
    <alternativeName>
        <fullName evidence="1">ATPase subunit I</fullName>
    </alternativeName>
    <alternativeName>
        <fullName evidence="1">F-type ATPase subunit b</fullName>
        <shortName evidence="1">F-ATPase subunit b</shortName>
    </alternativeName>
</protein>
<accession>B2A3G6</accession>
<sequence>MVDPNLVTFVLTIVNILVLFYLLKRFLFKPIGEFMENRKNEIKQNLEDAEKERQEAEKLKEQYYEKLRGAKSEAQEIIQQARQREEEIIKEAKQEAKQEADDMIARAREEINQEQKKAIESLRSEVSDLTIQITERVLNDTIDKDQQKKLVQKYLKEVGRVS</sequence>
<proteinExistence type="inferred from homology"/>
<keyword id="KW-0066">ATP synthesis</keyword>
<keyword id="KW-1003">Cell membrane</keyword>
<keyword id="KW-0138">CF(0)</keyword>
<keyword id="KW-0375">Hydrogen ion transport</keyword>
<keyword id="KW-0406">Ion transport</keyword>
<keyword id="KW-0472">Membrane</keyword>
<keyword id="KW-1185">Reference proteome</keyword>
<keyword id="KW-0812">Transmembrane</keyword>
<keyword id="KW-1133">Transmembrane helix</keyword>
<keyword id="KW-0813">Transport</keyword>
<feature type="chain" id="PRO_0000368618" description="ATP synthase subunit b">
    <location>
        <begin position="1"/>
        <end position="162"/>
    </location>
</feature>
<feature type="transmembrane region" description="Helical" evidence="1">
    <location>
        <begin position="6"/>
        <end position="28"/>
    </location>
</feature>
<organism>
    <name type="scientific">Natranaerobius thermophilus (strain ATCC BAA-1301 / DSM 18059 / JW/NM-WN-LF)</name>
    <dbReference type="NCBI Taxonomy" id="457570"/>
    <lineage>
        <taxon>Bacteria</taxon>
        <taxon>Bacillati</taxon>
        <taxon>Bacillota</taxon>
        <taxon>Clostridia</taxon>
        <taxon>Natranaerobiales</taxon>
        <taxon>Natranaerobiaceae</taxon>
        <taxon>Natranaerobius</taxon>
    </lineage>
</organism>
<gene>
    <name evidence="1" type="primary">atpF</name>
    <name type="ordered locus">Nther_2848</name>
</gene>
<name>ATPF_NATTJ</name>
<reference key="1">
    <citation type="submission" date="2008-04" db="EMBL/GenBank/DDBJ databases">
        <title>Complete sequence of chromosome of Natranaerobius thermophilus JW/NM-WN-LF.</title>
        <authorList>
            <consortium name="US DOE Joint Genome Institute"/>
            <person name="Copeland A."/>
            <person name="Lucas S."/>
            <person name="Lapidus A."/>
            <person name="Glavina del Rio T."/>
            <person name="Dalin E."/>
            <person name="Tice H."/>
            <person name="Bruce D."/>
            <person name="Goodwin L."/>
            <person name="Pitluck S."/>
            <person name="Chertkov O."/>
            <person name="Brettin T."/>
            <person name="Detter J.C."/>
            <person name="Han C."/>
            <person name="Kuske C.R."/>
            <person name="Schmutz J."/>
            <person name="Larimer F."/>
            <person name="Land M."/>
            <person name="Hauser L."/>
            <person name="Kyrpides N."/>
            <person name="Lykidis A."/>
            <person name="Mesbah N.M."/>
            <person name="Wiegel J."/>
        </authorList>
    </citation>
    <scope>NUCLEOTIDE SEQUENCE [LARGE SCALE GENOMIC DNA]</scope>
    <source>
        <strain>ATCC BAA-1301 / DSM 18059 / JW/NM-WN-LF</strain>
    </source>
</reference>
<dbReference type="EMBL" id="CP001034">
    <property type="protein sequence ID" value="ACB86395.1"/>
    <property type="molecule type" value="Genomic_DNA"/>
</dbReference>
<dbReference type="RefSeq" id="WP_012449227.1">
    <property type="nucleotide sequence ID" value="NC_010718.1"/>
</dbReference>
<dbReference type="SMR" id="B2A3G6"/>
<dbReference type="FunCoup" id="B2A3G6">
    <property type="interactions" value="82"/>
</dbReference>
<dbReference type="STRING" id="457570.Nther_2848"/>
<dbReference type="KEGG" id="nth:Nther_2848"/>
<dbReference type="eggNOG" id="COG0711">
    <property type="taxonomic scope" value="Bacteria"/>
</dbReference>
<dbReference type="HOGENOM" id="CLU_079215_4_0_9"/>
<dbReference type="InParanoid" id="B2A3G6"/>
<dbReference type="OrthoDB" id="1770883at2"/>
<dbReference type="Proteomes" id="UP000001683">
    <property type="component" value="Chromosome"/>
</dbReference>
<dbReference type="GO" id="GO:0005886">
    <property type="term" value="C:plasma membrane"/>
    <property type="evidence" value="ECO:0007669"/>
    <property type="project" value="UniProtKB-SubCell"/>
</dbReference>
<dbReference type="GO" id="GO:0045259">
    <property type="term" value="C:proton-transporting ATP synthase complex"/>
    <property type="evidence" value="ECO:0007669"/>
    <property type="project" value="UniProtKB-KW"/>
</dbReference>
<dbReference type="GO" id="GO:0046933">
    <property type="term" value="F:proton-transporting ATP synthase activity, rotational mechanism"/>
    <property type="evidence" value="ECO:0007669"/>
    <property type="project" value="UniProtKB-UniRule"/>
</dbReference>
<dbReference type="GO" id="GO:0046961">
    <property type="term" value="F:proton-transporting ATPase activity, rotational mechanism"/>
    <property type="evidence" value="ECO:0007669"/>
    <property type="project" value="TreeGrafter"/>
</dbReference>
<dbReference type="CDD" id="cd06503">
    <property type="entry name" value="ATP-synt_Fo_b"/>
    <property type="match status" value="1"/>
</dbReference>
<dbReference type="Gene3D" id="1.20.5.620">
    <property type="entry name" value="F1F0 ATP synthase subunit B, membrane domain"/>
    <property type="match status" value="1"/>
</dbReference>
<dbReference type="HAMAP" id="MF_01398">
    <property type="entry name" value="ATP_synth_b_bprime"/>
    <property type="match status" value="1"/>
</dbReference>
<dbReference type="InterPro" id="IPR028987">
    <property type="entry name" value="ATP_synth_B-like_membr_sf"/>
</dbReference>
<dbReference type="InterPro" id="IPR002146">
    <property type="entry name" value="ATP_synth_b/b'su_bac/chlpt"/>
</dbReference>
<dbReference type="InterPro" id="IPR005864">
    <property type="entry name" value="ATP_synth_F0_bsu_bac"/>
</dbReference>
<dbReference type="InterPro" id="IPR050059">
    <property type="entry name" value="ATP_synthase_B_chain"/>
</dbReference>
<dbReference type="NCBIfam" id="TIGR01144">
    <property type="entry name" value="ATP_synt_b"/>
    <property type="match status" value="1"/>
</dbReference>
<dbReference type="PANTHER" id="PTHR33445">
    <property type="entry name" value="ATP SYNTHASE SUBUNIT B', CHLOROPLASTIC"/>
    <property type="match status" value="1"/>
</dbReference>
<dbReference type="PANTHER" id="PTHR33445:SF2">
    <property type="entry name" value="ATP SYNTHASE SUBUNIT B', CHLOROPLASTIC"/>
    <property type="match status" value="1"/>
</dbReference>
<dbReference type="Pfam" id="PF00430">
    <property type="entry name" value="ATP-synt_B"/>
    <property type="match status" value="1"/>
</dbReference>
<dbReference type="SUPFAM" id="SSF81573">
    <property type="entry name" value="F1F0 ATP synthase subunit B, membrane domain"/>
    <property type="match status" value="1"/>
</dbReference>
<comment type="function">
    <text evidence="1">F(1)F(0) ATP synthase produces ATP from ADP in the presence of a proton or sodium gradient. F-type ATPases consist of two structural domains, F(1) containing the extramembraneous catalytic core and F(0) containing the membrane proton channel, linked together by a central stalk and a peripheral stalk. During catalysis, ATP synthesis in the catalytic domain of F(1) is coupled via a rotary mechanism of the central stalk subunits to proton translocation.</text>
</comment>
<comment type="function">
    <text evidence="1">Component of the F(0) channel, it forms part of the peripheral stalk, linking F(1) to F(0).</text>
</comment>
<comment type="subunit">
    <text evidence="1">F-type ATPases have 2 components, F(1) - the catalytic core - and F(0) - the membrane proton channel. F(1) has five subunits: alpha(3), beta(3), gamma(1), delta(1), epsilon(1). F(0) has three main subunits: a(1), b(2) and c(10-14). The alpha and beta chains form an alternating ring which encloses part of the gamma chain. F(1) is attached to F(0) by a central stalk formed by the gamma and epsilon chains, while a peripheral stalk is formed by the delta and b chains.</text>
</comment>
<comment type="subcellular location">
    <subcellularLocation>
        <location evidence="1">Cell membrane</location>
        <topology evidence="1">Single-pass membrane protein</topology>
    </subcellularLocation>
</comment>
<comment type="similarity">
    <text evidence="1">Belongs to the ATPase B chain family.</text>
</comment>